<organism>
    <name type="scientific">Homo sapiens</name>
    <name type="common">Human</name>
    <dbReference type="NCBI Taxonomy" id="9606"/>
    <lineage>
        <taxon>Eukaryota</taxon>
        <taxon>Metazoa</taxon>
        <taxon>Chordata</taxon>
        <taxon>Craniata</taxon>
        <taxon>Vertebrata</taxon>
        <taxon>Euteleostomi</taxon>
        <taxon>Mammalia</taxon>
        <taxon>Eutheria</taxon>
        <taxon>Euarchontoglires</taxon>
        <taxon>Primates</taxon>
        <taxon>Haplorrhini</taxon>
        <taxon>Catarrhini</taxon>
        <taxon>Hominidae</taxon>
        <taxon>Homo</taxon>
    </lineage>
</organism>
<sequence>MDRGQPSLEPAAAAPRASGRCVIAPVRAVLRLRRRVCVLRKRRLLQPGGGPDVGTGAPRPGCSPRAPRADLDQPKFFTFDSPAELPSRTPRKKRRRSRLVLYPETSRKYRPRVEHRSRAQRCLLLLVAIVGFQVLNAIENLDDNAQRYDLDGLEKALQRAVFGQPAAVSRIVALMRDYLATHVHSRPLLLALHGPSGVGKSHVGRLLARHFRSVLEDSALVLQYHARHHCPEARAAQDCREELARRVADVVARAEAEEKTPLLVLDDVELMPRPLLDELHGFLQPQRSHHFHNAIYVLLSGAGGAEVTRFVLQNASRALPLRPDGFRSAEAAAAQAEEDLRASLLAVLSREHPLWQAAAIVPFLLLDKRDVVSCFRDEMAGEGFFPDQARAENLAAQLSFYRVAGREFAVTGCKQVVATVNLL</sequence>
<evidence type="ECO:0000255" key="1"/>
<evidence type="ECO:0000256" key="2">
    <source>
        <dbReference type="SAM" id="MobiDB-lite"/>
    </source>
</evidence>
<evidence type="ECO:0000305" key="3"/>
<evidence type="ECO:0007744" key="4">
    <source>
    </source>
</evidence>
<evidence type="ECO:0007744" key="5">
    <source>
    </source>
</evidence>
<keyword id="KW-0067">ATP-binding</keyword>
<keyword id="KW-0472">Membrane</keyword>
<keyword id="KW-0547">Nucleotide-binding</keyword>
<keyword id="KW-0597">Phosphoprotein</keyword>
<keyword id="KW-1267">Proteomics identification</keyword>
<keyword id="KW-1185">Reference proteome</keyword>
<keyword id="KW-0812">Transmembrane</keyword>
<keyword id="KW-1133">Transmembrane helix</keyword>
<name>TOR4A_HUMAN</name>
<reference key="1">
    <citation type="journal article" date="2004" name="Nat. Genet.">
        <title>Complete sequencing and characterization of 21,243 full-length human cDNAs.</title>
        <authorList>
            <person name="Ota T."/>
            <person name="Suzuki Y."/>
            <person name="Nishikawa T."/>
            <person name="Otsuki T."/>
            <person name="Sugiyama T."/>
            <person name="Irie R."/>
            <person name="Wakamatsu A."/>
            <person name="Hayashi K."/>
            <person name="Sato H."/>
            <person name="Nagai K."/>
            <person name="Kimura K."/>
            <person name="Makita H."/>
            <person name="Sekine M."/>
            <person name="Obayashi M."/>
            <person name="Nishi T."/>
            <person name="Shibahara T."/>
            <person name="Tanaka T."/>
            <person name="Ishii S."/>
            <person name="Yamamoto J."/>
            <person name="Saito K."/>
            <person name="Kawai Y."/>
            <person name="Isono Y."/>
            <person name="Nakamura Y."/>
            <person name="Nagahari K."/>
            <person name="Murakami K."/>
            <person name="Yasuda T."/>
            <person name="Iwayanagi T."/>
            <person name="Wagatsuma M."/>
            <person name="Shiratori A."/>
            <person name="Sudo H."/>
            <person name="Hosoiri T."/>
            <person name="Kaku Y."/>
            <person name="Kodaira H."/>
            <person name="Kondo H."/>
            <person name="Sugawara M."/>
            <person name="Takahashi M."/>
            <person name="Kanda K."/>
            <person name="Yokoi T."/>
            <person name="Furuya T."/>
            <person name="Kikkawa E."/>
            <person name="Omura Y."/>
            <person name="Abe K."/>
            <person name="Kamihara K."/>
            <person name="Katsuta N."/>
            <person name="Sato K."/>
            <person name="Tanikawa M."/>
            <person name="Yamazaki M."/>
            <person name="Ninomiya K."/>
            <person name="Ishibashi T."/>
            <person name="Yamashita H."/>
            <person name="Murakawa K."/>
            <person name="Fujimori K."/>
            <person name="Tanai H."/>
            <person name="Kimata M."/>
            <person name="Watanabe M."/>
            <person name="Hiraoka S."/>
            <person name="Chiba Y."/>
            <person name="Ishida S."/>
            <person name="Ono Y."/>
            <person name="Takiguchi S."/>
            <person name="Watanabe S."/>
            <person name="Yosida M."/>
            <person name="Hotuta T."/>
            <person name="Kusano J."/>
            <person name="Kanehori K."/>
            <person name="Takahashi-Fujii A."/>
            <person name="Hara H."/>
            <person name="Tanase T.-O."/>
            <person name="Nomura Y."/>
            <person name="Togiya S."/>
            <person name="Komai F."/>
            <person name="Hara R."/>
            <person name="Takeuchi K."/>
            <person name="Arita M."/>
            <person name="Imose N."/>
            <person name="Musashino K."/>
            <person name="Yuuki H."/>
            <person name="Oshima A."/>
            <person name="Sasaki N."/>
            <person name="Aotsuka S."/>
            <person name="Yoshikawa Y."/>
            <person name="Matsunawa H."/>
            <person name="Ichihara T."/>
            <person name="Shiohata N."/>
            <person name="Sano S."/>
            <person name="Moriya S."/>
            <person name="Momiyama H."/>
            <person name="Satoh N."/>
            <person name="Takami S."/>
            <person name="Terashima Y."/>
            <person name="Suzuki O."/>
            <person name="Nakagawa S."/>
            <person name="Senoh A."/>
            <person name="Mizoguchi H."/>
            <person name="Goto Y."/>
            <person name="Shimizu F."/>
            <person name="Wakebe H."/>
            <person name="Hishigaki H."/>
            <person name="Watanabe T."/>
            <person name="Sugiyama A."/>
            <person name="Takemoto M."/>
            <person name="Kawakami B."/>
            <person name="Yamazaki M."/>
            <person name="Watanabe K."/>
            <person name="Kumagai A."/>
            <person name="Itakura S."/>
            <person name="Fukuzumi Y."/>
            <person name="Fujimori Y."/>
            <person name="Komiyama M."/>
            <person name="Tashiro H."/>
            <person name="Tanigami A."/>
            <person name="Fujiwara T."/>
            <person name="Ono T."/>
            <person name="Yamada K."/>
            <person name="Fujii Y."/>
            <person name="Ozaki K."/>
            <person name="Hirao M."/>
            <person name="Ohmori Y."/>
            <person name="Kawabata A."/>
            <person name="Hikiji T."/>
            <person name="Kobatake N."/>
            <person name="Inagaki H."/>
            <person name="Ikema Y."/>
            <person name="Okamoto S."/>
            <person name="Okitani R."/>
            <person name="Kawakami T."/>
            <person name="Noguchi S."/>
            <person name="Itoh T."/>
            <person name="Shigeta K."/>
            <person name="Senba T."/>
            <person name="Matsumura K."/>
            <person name="Nakajima Y."/>
            <person name="Mizuno T."/>
            <person name="Morinaga M."/>
            <person name="Sasaki M."/>
            <person name="Togashi T."/>
            <person name="Oyama M."/>
            <person name="Hata H."/>
            <person name="Watanabe M."/>
            <person name="Komatsu T."/>
            <person name="Mizushima-Sugano J."/>
            <person name="Satoh T."/>
            <person name="Shirai Y."/>
            <person name="Takahashi Y."/>
            <person name="Nakagawa K."/>
            <person name="Okumura K."/>
            <person name="Nagase T."/>
            <person name="Nomura N."/>
            <person name="Kikuchi H."/>
            <person name="Masuho Y."/>
            <person name="Yamashita R."/>
            <person name="Nakai K."/>
            <person name="Yada T."/>
            <person name="Nakamura Y."/>
            <person name="Ohara O."/>
            <person name="Isogai T."/>
            <person name="Sugano S."/>
        </authorList>
    </citation>
    <scope>NUCLEOTIDE SEQUENCE [LARGE SCALE MRNA]</scope>
    <source>
        <tissue>Colon mucosa</tissue>
    </source>
</reference>
<reference key="2">
    <citation type="journal article" date="2004" name="Nature">
        <title>DNA sequence and analysis of human chromosome 9.</title>
        <authorList>
            <person name="Humphray S.J."/>
            <person name="Oliver K."/>
            <person name="Hunt A.R."/>
            <person name="Plumb R.W."/>
            <person name="Loveland J.E."/>
            <person name="Howe K.L."/>
            <person name="Andrews T.D."/>
            <person name="Searle S."/>
            <person name="Hunt S.E."/>
            <person name="Scott C.E."/>
            <person name="Jones M.C."/>
            <person name="Ainscough R."/>
            <person name="Almeida J.P."/>
            <person name="Ambrose K.D."/>
            <person name="Ashwell R.I.S."/>
            <person name="Babbage A.K."/>
            <person name="Babbage S."/>
            <person name="Bagguley C.L."/>
            <person name="Bailey J."/>
            <person name="Banerjee R."/>
            <person name="Barker D.J."/>
            <person name="Barlow K.F."/>
            <person name="Bates K."/>
            <person name="Beasley H."/>
            <person name="Beasley O."/>
            <person name="Bird C.P."/>
            <person name="Bray-Allen S."/>
            <person name="Brown A.J."/>
            <person name="Brown J.Y."/>
            <person name="Burford D."/>
            <person name="Burrill W."/>
            <person name="Burton J."/>
            <person name="Carder C."/>
            <person name="Carter N.P."/>
            <person name="Chapman J.C."/>
            <person name="Chen Y."/>
            <person name="Clarke G."/>
            <person name="Clark S.Y."/>
            <person name="Clee C.M."/>
            <person name="Clegg S."/>
            <person name="Collier R.E."/>
            <person name="Corby N."/>
            <person name="Crosier M."/>
            <person name="Cummings A.T."/>
            <person name="Davies J."/>
            <person name="Dhami P."/>
            <person name="Dunn M."/>
            <person name="Dutta I."/>
            <person name="Dyer L.W."/>
            <person name="Earthrowl M.E."/>
            <person name="Faulkner L."/>
            <person name="Fleming C.J."/>
            <person name="Frankish A."/>
            <person name="Frankland J.A."/>
            <person name="French L."/>
            <person name="Fricker D.G."/>
            <person name="Garner P."/>
            <person name="Garnett J."/>
            <person name="Ghori J."/>
            <person name="Gilbert J.G.R."/>
            <person name="Glison C."/>
            <person name="Grafham D.V."/>
            <person name="Gribble S."/>
            <person name="Griffiths C."/>
            <person name="Griffiths-Jones S."/>
            <person name="Grocock R."/>
            <person name="Guy J."/>
            <person name="Hall R.E."/>
            <person name="Hammond S."/>
            <person name="Harley J.L."/>
            <person name="Harrison E.S.I."/>
            <person name="Hart E.A."/>
            <person name="Heath P.D."/>
            <person name="Henderson C.D."/>
            <person name="Hopkins B.L."/>
            <person name="Howard P.J."/>
            <person name="Howden P.J."/>
            <person name="Huckle E."/>
            <person name="Johnson C."/>
            <person name="Johnson D."/>
            <person name="Joy A.A."/>
            <person name="Kay M."/>
            <person name="Keenan S."/>
            <person name="Kershaw J.K."/>
            <person name="Kimberley A.M."/>
            <person name="King A."/>
            <person name="Knights A."/>
            <person name="Laird G.K."/>
            <person name="Langford C."/>
            <person name="Lawlor S."/>
            <person name="Leongamornlert D.A."/>
            <person name="Leversha M."/>
            <person name="Lloyd C."/>
            <person name="Lloyd D.M."/>
            <person name="Lovell J."/>
            <person name="Martin S."/>
            <person name="Mashreghi-Mohammadi M."/>
            <person name="Matthews L."/>
            <person name="McLaren S."/>
            <person name="McLay K.E."/>
            <person name="McMurray A."/>
            <person name="Milne S."/>
            <person name="Nickerson T."/>
            <person name="Nisbett J."/>
            <person name="Nordsiek G."/>
            <person name="Pearce A.V."/>
            <person name="Peck A.I."/>
            <person name="Porter K.M."/>
            <person name="Pandian R."/>
            <person name="Pelan S."/>
            <person name="Phillimore B."/>
            <person name="Povey S."/>
            <person name="Ramsey Y."/>
            <person name="Rand V."/>
            <person name="Scharfe M."/>
            <person name="Sehra H.K."/>
            <person name="Shownkeen R."/>
            <person name="Sims S.K."/>
            <person name="Skuce C.D."/>
            <person name="Smith M."/>
            <person name="Steward C.A."/>
            <person name="Swarbreck D."/>
            <person name="Sycamore N."/>
            <person name="Tester J."/>
            <person name="Thorpe A."/>
            <person name="Tracey A."/>
            <person name="Tromans A."/>
            <person name="Thomas D.W."/>
            <person name="Wall M."/>
            <person name="Wallis J.M."/>
            <person name="West A.P."/>
            <person name="Whitehead S.L."/>
            <person name="Willey D.L."/>
            <person name="Williams S.A."/>
            <person name="Wilming L."/>
            <person name="Wray P.W."/>
            <person name="Young L."/>
            <person name="Ashurst J.L."/>
            <person name="Coulson A."/>
            <person name="Blocker H."/>
            <person name="Durbin R.M."/>
            <person name="Sulston J.E."/>
            <person name="Hubbard T."/>
            <person name="Jackson M.J."/>
            <person name="Bentley D.R."/>
            <person name="Beck S."/>
            <person name="Rogers J."/>
            <person name="Dunham I."/>
        </authorList>
    </citation>
    <scope>NUCLEOTIDE SEQUENCE [LARGE SCALE GENOMIC DNA]</scope>
</reference>
<reference key="3">
    <citation type="journal article" date="2008" name="Proc. Natl. Acad. Sci. U.S.A.">
        <title>A quantitative atlas of mitotic phosphorylation.</title>
        <authorList>
            <person name="Dephoure N."/>
            <person name="Zhou C."/>
            <person name="Villen J."/>
            <person name="Beausoleil S.A."/>
            <person name="Bakalarski C.E."/>
            <person name="Elledge S.J."/>
            <person name="Gygi S.P."/>
        </authorList>
    </citation>
    <scope>PHOSPHORYLATION [LARGE SCALE ANALYSIS] AT SER-81</scope>
    <scope>IDENTIFICATION BY MASS SPECTROMETRY [LARGE SCALE ANALYSIS]</scope>
    <source>
        <tissue>Cervix carcinoma</tissue>
    </source>
</reference>
<reference key="4">
    <citation type="journal article" date="2013" name="J. Proteome Res.">
        <title>Toward a comprehensive characterization of a human cancer cell phosphoproteome.</title>
        <authorList>
            <person name="Zhou H."/>
            <person name="Di Palma S."/>
            <person name="Preisinger C."/>
            <person name="Peng M."/>
            <person name="Polat A.N."/>
            <person name="Heck A.J."/>
            <person name="Mohammed S."/>
        </authorList>
    </citation>
    <scope>PHOSPHORYLATION [LARGE SCALE ANALYSIS] AT SER-63; THR-89 AND SER-106</scope>
    <scope>IDENTIFICATION BY MASS SPECTROMETRY [LARGE SCALE ANALYSIS]</scope>
    <source>
        <tissue>Erythroleukemia</tissue>
    </source>
</reference>
<comment type="subcellular location">
    <subcellularLocation>
        <location evidence="3">Membrane</location>
        <topology evidence="3">Single-pass membrane protein</topology>
    </subcellularLocation>
</comment>
<comment type="similarity">
    <text evidence="3">Belongs to the ClpA/ClpB family. Torsin subfamily.</text>
</comment>
<gene>
    <name type="primary">TOR4A</name>
    <name type="synonym">C9orf167</name>
</gene>
<accession>Q9NXH8</accession>
<accession>A2BFA4</accession>
<protein>
    <recommendedName>
        <fullName>Torsin-4A</fullName>
    </recommendedName>
    <alternativeName>
        <fullName>Torsin family 4 member A</fullName>
    </alternativeName>
</protein>
<dbReference type="EMBL" id="AK000252">
    <property type="protein sequence ID" value="BAA91032.1"/>
    <property type="molecule type" value="mRNA"/>
</dbReference>
<dbReference type="EMBL" id="BX255925">
    <property type="status" value="NOT_ANNOTATED_CDS"/>
    <property type="molecule type" value="Genomic_DNA"/>
</dbReference>
<dbReference type="CCDS" id="CCDS7041.1"/>
<dbReference type="RefSeq" id="NP_060193.2">
    <property type="nucleotide sequence ID" value="NM_017723.3"/>
</dbReference>
<dbReference type="SMR" id="Q9NXH8"/>
<dbReference type="BioGRID" id="120213">
    <property type="interactions" value="49"/>
</dbReference>
<dbReference type="FunCoup" id="Q9NXH8">
    <property type="interactions" value="304"/>
</dbReference>
<dbReference type="IntAct" id="Q9NXH8">
    <property type="interactions" value="30"/>
</dbReference>
<dbReference type="MINT" id="Q9NXH8"/>
<dbReference type="STRING" id="9606.ENSP00000350102"/>
<dbReference type="GlyGen" id="Q9NXH8">
    <property type="glycosylation" value="2 sites, 9 N-linked glycans (1 site), 1 O-linked glycan (1 site)"/>
</dbReference>
<dbReference type="iPTMnet" id="Q9NXH8"/>
<dbReference type="PhosphoSitePlus" id="Q9NXH8"/>
<dbReference type="BioMuta" id="TOR4A"/>
<dbReference type="DMDM" id="147638588"/>
<dbReference type="jPOST" id="Q9NXH8"/>
<dbReference type="MassIVE" id="Q9NXH8"/>
<dbReference type="PaxDb" id="9606-ENSP00000350102"/>
<dbReference type="PeptideAtlas" id="Q9NXH8"/>
<dbReference type="ProteomicsDB" id="83099"/>
<dbReference type="Pumba" id="Q9NXH8"/>
<dbReference type="Antibodypedia" id="48995">
    <property type="antibodies" value="21 antibodies from 12 providers"/>
</dbReference>
<dbReference type="DNASU" id="54863"/>
<dbReference type="Ensembl" id="ENST00000357503.3">
    <property type="protein sequence ID" value="ENSP00000350102.2"/>
    <property type="gene ID" value="ENSG00000198113.3"/>
</dbReference>
<dbReference type="GeneID" id="54863"/>
<dbReference type="KEGG" id="hsa:54863"/>
<dbReference type="MANE-Select" id="ENST00000357503.3">
    <property type="protein sequence ID" value="ENSP00000350102.2"/>
    <property type="RefSeq nucleotide sequence ID" value="NM_017723.3"/>
    <property type="RefSeq protein sequence ID" value="NP_060193.2"/>
</dbReference>
<dbReference type="UCSC" id="uc004cmn.4">
    <property type="organism name" value="human"/>
</dbReference>
<dbReference type="AGR" id="HGNC:25981"/>
<dbReference type="CTD" id="54863"/>
<dbReference type="GeneCards" id="TOR4A"/>
<dbReference type="HGNC" id="HGNC:25981">
    <property type="gene designation" value="TOR4A"/>
</dbReference>
<dbReference type="HPA" id="ENSG00000198113">
    <property type="expression patterns" value="Low tissue specificity"/>
</dbReference>
<dbReference type="neXtProt" id="NX_Q9NXH8"/>
<dbReference type="OpenTargets" id="ENSG00000198113"/>
<dbReference type="PharmGKB" id="PA162380839"/>
<dbReference type="VEuPathDB" id="HostDB:ENSG00000198113"/>
<dbReference type="eggNOG" id="KOG2170">
    <property type="taxonomic scope" value="Eukaryota"/>
</dbReference>
<dbReference type="GeneTree" id="ENSGT00950000182888"/>
<dbReference type="HOGENOM" id="CLU_053537_1_0_1"/>
<dbReference type="InParanoid" id="Q9NXH8"/>
<dbReference type="OMA" id="EFAITGC"/>
<dbReference type="OrthoDB" id="9443236at2759"/>
<dbReference type="PAN-GO" id="Q9NXH8">
    <property type="GO annotations" value="2 GO annotations based on evolutionary models"/>
</dbReference>
<dbReference type="PhylomeDB" id="Q9NXH8"/>
<dbReference type="TreeFam" id="TF314941"/>
<dbReference type="PathwayCommons" id="Q9NXH8"/>
<dbReference type="Reactome" id="R-HSA-114608">
    <property type="pathway name" value="Platelet degranulation"/>
</dbReference>
<dbReference type="SignaLink" id="Q9NXH8"/>
<dbReference type="BioGRID-ORCS" id="54863">
    <property type="hits" value="23 hits in 1155 CRISPR screens"/>
</dbReference>
<dbReference type="GenomeRNAi" id="54863"/>
<dbReference type="Pharos" id="Q9NXH8">
    <property type="development level" value="Tdark"/>
</dbReference>
<dbReference type="PRO" id="PR:Q9NXH8"/>
<dbReference type="Proteomes" id="UP000005640">
    <property type="component" value="Chromosome 9"/>
</dbReference>
<dbReference type="RNAct" id="Q9NXH8">
    <property type="molecule type" value="protein"/>
</dbReference>
<dbReference type="Bgee" id="ENSG00000198113">
    <property type="expression patterns" value="Expressed in buccal mucosa cell and 108 other cell types or tissues"/>
</dbReference>
<dbReference type="GO" id="GO:0005788">
    <property type="term" value="C:endoplasmic reticulum lumen"/>
    <property type="evidence" value="ECO:0000318"/>
    <property type="project" value="GO_Central"/>
</dbReference>
<dbReference type="GO" id="GO:0005576">
    <property type="term" value="C:extracellular region"/>
    <property type="evidence" value="ECO:0000304"/>
    <property type="project" value="Reactome"/>
</dbReference>
<dbReference type="GO" id="GO:0016020">
    <property type="term" value="C:membrane"/>
    <property type="evidence" value="ECO:0007669"/>
    <property type="project" value="UniProtKB-SubCell"/>
</dbReference>
<dbReference type="GO" id="GO:0005635">
    <property type="term" value="C:nuclear envelope"/>
    <property type="evidence" value="ECO:0000318"/>
    <property type="project" value="GO_Central"/>
</dbReference>
<dbReference type="GO" id="GO:0031093">
    <property type="term" value="C:platelet alpha granule lumen"/>
    <property type="evidence" value="ECO:0000304"/>
    <property type="project" value="Reactome"/>
</dbReference>
<dbReference type="GO" id="GO:0005524">
    <property type="term" value="F:ATP binding"/>
    <property type="evidence" value="ECO:0007669"/>
    <property type="project" value="UniProtKB-KW"/>
</dbReference>
<dbReference type="GO" id="GO:0016887">
    <property type="term" value="F:ATP hydrolysis activity"/>
    <property type="evidence" value="ECO:0007669"/>
    <property type="project" value="InterPro"/>
</dbReference>
<dbReference type="FunFam" id="3.40.50.300:FF:001429">
    <property type="entry name" value="Torsin family protein C9orf167-like"/>
    <property type="match status" value="1"/>
</dbReference>
<dbReference type="Gene3D" id="3.40.50.300">
    <property type="entry name" value="P-loop containing nucleotide triphosphate hydrolases"/>
    <property type="match status" value="1"/>
</dbReference>
<dbReference type="InterPro" id="IPR003593">
    <property type="entry name" value="AAA+_ATPase"/>
</dbReference>
<dbReference type="InterPro" id="IPR027417">
    <property type="entry name" value="P-loop_NTPase"/>
</dbReference>
<dbReference type="InterPro" id="IPR010448">
    <property type="entry name" value="Torsin"/>
</dbReference>
<dbReference type="PANTHER" id="PTHR10760">
    <property type="entry name" value="TORSIN"/>
    <property type="match status" value="1"/>
</dbReference>
<dbReference type="PANTHER" id="PTHR10760:SF1">
    <property type="entry name" value="TORSIN-4A"/>
    <property type="match status" value="1"/>
</dbReference>
<dbReference type="Pfam" id="PF06309">
    <property type="entry name" value="Torsin"/>
    <property type="match status" value="1"/>
</dbReference>
<dbReference type="SMART" id="SM00382">
    <property type="entry name" value="AAA"/>
    <property type="match status" value="1"/>
</dbReference>
<dbReference type="SUPFAM" id="SSF52540">
    <property type="entry name" value="P-loop containing nucleoside triphosphate hydrolases"/>
    <property type="match status" value="1"/>
</dbReference>
<feature type="chain" id="PRO_0000287489" description="Torsin-4A">
    <location>
        <begin position="1"/>
        <end position="423"/>
    </location>
</feature>
<feature type="transmembrane region" description="Helical" evidence="1">
    <location>
        <begin position="122"/>
        <end position="138"/>
    </location>
</feature>
<feature type="region of interest" description="Disordered" evidence="2">
    <location>
        <begin position="47"/>
        <end position="68"/>
    </location>
</feature>
<feature type="binding site" evidence="1">
    <location>
        <begin position="194"/>
        <end position="201"/>
    </location>
    <ligand>
        <name>ATP</name>
        <dbReference type="ChEBI" id="CHEBI:30616"/>
    </ligand>
</feature>
<feature type="modified residue" description="Phosphoserine" evidence="5">
    <location>
        <position position="63"/>
    </location>
</feature>
<feature type="modified residue" description="Phosphoserine" evidence="4">
    <location>
        <position position="81"/>
    </location>
</feature>
<feature type="modified residue" description="Phosphothreonine" evidence="5">
    <location>
        <position position="89"/>
    </location>
</feature>
<feature type="modified residue" description="Phosphoserine" evidence="5">
    <location>
        <position position="106"/>
    </location>
</feature>
<feature type="sequence conflict" description="In Ref. 1; BAA91032." evidence="3" ref="1">
    <original>Q</original>
    <variation>R</variation>
    <location>
        <position position="356"/>
    </location>
</feature>
<proteinExistence type="evidence at protein level"/>